<organism>
    <name type="scientific">Kluyveromyces lactis (strain ATCC 8585 / CBS 2359 / DSM 70799 / NBRC 1267 / NRRL Y-1140 / WM37)</name>
    <name type="common">Yeast</name>
    <name type="synonym">Candida sphaerica</name>
    <dbReference type="NCBI Taxonomy" id="284590"/>
    <lineage>
        <taxon>Eukaryota</taxon>
        <taxon>Fungi</taxon>
        <taxon>Dikarya</taxon>
        <taxon>Ascomycota</taxon>
        <taxon>Saccharomycotina</taxon>
        <taxon>Saccharomycetes</taxon>
        <taxon>Saccharomycetales</taxon>
        <taxon>Saccharomycetaceae</taxon>
        <taxon>Kluyveromyces</taxon>
    </lineage>
</organism>
<feature type="chain" id="PRO_0000067061" description="Transcription factor MBP1">
    <location>
        <begin position="1"/>
        <end position="754"/>
    </location>
</feature>
<feature type="domain" description="HTH APSES-type" evidence="1">
    <location>
        <begin position="6"/>
        <end position="112"/>
    </location>
</feature>
<feature type="repeat" description="ANK 1">
    <location>
        <begin position="375"/>
        <end position="404"/>
    </location>
</feature>
<feature type="repeat" description="ANK 2">
    <location>
        <begin position="493"/>
        <end position="522"/>
    </location>
</feature>
<feature type="DNA-binding region" description="H-T-H motif" evidence="1">
    <location>
        <begin position="37"/>
        <end position="58"/>
    </location>
</feature>
<feature type="region of interest" description="Disordered" evidence="2">
    <location>
        <begin position="105"/>
        <end position="215"/>
    </location>
</feature>
<feature type="region of interest" description="Disordered" evidence="2">
    <location>
        <begin position="239"/>
        <end position="301"/>
    </location>
</feature>
<feature type="compositionally biased region" description="Low complexity" evidence="2">
    <location>
        <begin position="147"/>
        <end position="162"/>
    </location>
</feature>
<feature type="compositionally biased region" description="Polar residues" evidence="2">
    <location>
        <begin position="177"/>
        <end position="187"/>
    </location>
</feature>
<feature type="compositionally biased region" description="Polar residues" evidence="2">
    <location>
        <begin position="203"/>
        <end position="215"/>
    </location>
</feature>
<feature type="compositionally biased region" description="Basic and acidic residues" evidence="2">
    <location>
        <begin position="257"/>
        <end position="272"/>
    </location>
</feature>
<feature type="compositionally biased region" description="Low complexity" evidence="2">
    <location>
        <begin position="273"/>
        <end position="289"/>
    </location>
</feature>
<feature type="compositionally biased region" description="Polar residues" evidence="2">
    <location>
        <begin position="290"/>
        <end position="301"/>
    </location>
</feature>
<feature type="sequence conflict" description="In Ref. 1; CAA52272." evidence="3" ref="1">
    <original>I</original>
    <variation>S</variation>
    <location>
        <position position="372"/>
    </location>
</feature>
<accession>P39679</accession>
<accession>Q6CPF0</accession>
<name>MBP1_KLULA</name>
<dbReference type="EMBL" id="X74159">
    <property type="protein sequence ID" value="CAA52272.1"/>
    <property type="molecule type" value="Genomic_DNA"/>
</dbReference>
<dbReference type="EMBL" id="CR382125">
    <property type="protein sequence ID" value="CAG99276.1"/>
    <property type="molecule type" value="Genomic_DNA"/>
</dbReference>
<dbReference type="PIR" id="S37403">
    <property type="entry name" value="S37403"/>
</dbReference>
<dbReference type="RefSeq" id="XP_454189.1">
    <property type="nucleotide sequence ID" value="XM_454189.1"/>
</dbReference>
<dbReference type="SMR" id="P39679"/>
<dbReference type="FunCoup" id="P39679">
    <property type="interactions" value="901"/>
</dbReference>
<dbReference type="STRING" id="284590.P39679"/>
<dbReference type="PaxDb" id="284590-P39679"/>
<dbReference type="KEGG" id="kla:KLLA0_E05413g"/>
<dbReference type="eggNOG" id="KOG4177">
    <property type="taxonomic scope" value="Eukaryota"/>
</dbReference>
<dbReference type="HOGENOM" id="CLU_009666_3_0_1"/>
<dbReference type="InParanoid" id="P39679"/>
<dbReference type="OMA" id="IHHAAIM"/>
<dbReference type="Proteomes" id="UP000000598">
    <property type="component" value="Chromosome E"/>
</dbReference>
<dbReference type="GO" id="GO:0030907">
    <property type="term" value="C:MBF transcription complex"/>
    <property type="evidence" value="ECO:0007669"/>
    <property type="project" value="TreeGrafter"/>
</dbReference>
<dbReference type="GO" id="GO:0033309">
    <property type="term" value="C:SBF transcription complex"/>
    <property type="evidence" value="ECO:0007669"/>
    <property type="project" value="TreeGrafter"/>
</dbReference>
<dbReference type="GO" id="GO:0003677">
    <property type="term" value="F:DNA binding"/>
    <property type="evidence" value="ECO:0007669"/>
    <property type="project" value="UniProtKB-KW"/>
</dbReference>
<dbReference type="GO" id="GO:0001228">
    <property type="term" value="F:DNA-binding transcription activator activity, RNA polymerase II-specific"/>
    <property type="evidence" value="ECO:0007669"/>
    <property type="project" value="UniProtKB-ARBA"/>
</dbReference>
<dbReference type="FunFam" id="3.10.260.10:FF:000004">
    <property type="entry name" value="Transcription factor MBP1"/>
    <property type="match status" value="1"/>
</dbReference>
<dbReference type="Gene3D" id="1.25.40.20">
    <property type="entry name" value="Ankyrin repeat-containing domain"/>
    <property type="match status" value="1"/>
</dbReference>
<dbReference type="Gene3D" id="3.10.260.10">
    <property type="entry name" value="Transcription regulator HTH, APSES-type DNA-binding domain"/>
    <property type="match status" value="1"/>
</dbReference>
<dbReference type="InterPro" id="IPR002110">
    <property type="entry name" value="Ankyrin_rpt"/>
</dbReference>
<dbReference type="InterPro" id="IPR036770">
    <property type="entry name" value="Ankyrin_rpt-contain_sf"/>
</dbReference>
<dbReference type="InterPro" id="IPR036887">
    <property type="entry name" value="HTH_APSES_sf"/>
</dbReference>
<dbReference type="InterPro" id="IPR018004">
    <property type="entry name" value="KilA/APSES_HTH"/>
</dbReference>
<dbReference type="InterPro" id="IPR051642">
    <property type="entry name" value="SWI6-like"/>
</dbReference>
<dbReference type="InterPro" id="IPR003163">
    <property type="entry name" value="Tscrpt_reg_HTH_APSES-type"/>
</dbReference>
<dbReference type="PANTHER" id="PTHR43828">
    <property type="entry name" value="ASPARAGINASE"/>
    <property type="match status" value="1"/>
</dbReference>
<dbReference type="PANTHER" id="PTHR43828:SF15">
    <property type="entry name" value="TRANSCRIPTION FACTOR MBP1"/>
    <property type="match status" value="1"/>
</dbReference>
<dbReference type="Pfam" id="PF00023">
    <property type="entry name" value="Ank"/>
    <property type="match status" value="2"/>
</dbReference>
<dbReference type="Pfam" id="PF04383">
    <property type="entry name" value="KilA-N"/>
    <property type="match status" value="1"/>
</dbReference>
<dbReference type="SMART" id="SM00248">
    <property type="entry name" value="ANK"/>
    <property type="match status" value="2"/>
</dbReference>
<dbReference type="SMART" id="SM01252">
    <property type="entry name" value="KilA-N"/>
    <property type="match status" value="1"/>
</dbReference>
<dbReference type="SUPFAM" id="SSF48403">
    <property type="entry name" value="Ankyrin repeat"/>
    <property type="match status" value="1"/>
</dbReference>
<dbReference type="SUPFAM" id="SSF54616">
    <property type="entry name" value="DNA-binding domain of Mlu1-box binding protein MBP1"/>
    <property type="match status" value="1"/>
</dbReference>
<dbReference type="PROSITE" id="PS50297">
    <property type="entry name" value="ANK_REP_REGION"/>
    <property type="match status" value="1"/>
</dbReference>
<dbReference type="PROSITE" id="PS50088">
    <property type="entry name" value="ANK_REPEAT"/>
    <property type="match status" value="2"/>
</dbReference>
<dbReference type="PROSITE" id="PS51299">
    <property type="entry name" value="HTH_APSES"/>
    <property type="match status" value="1"/>
</dbReference>
<comment type="function">
    <text>Binds to MCB elements (Mlu I cell cycle box) found in the promoter of most DNA synthesis genes. Transcriptional activation by MBF has an important role in the transition from G1 to S phase. It may have a dual role in that it behaves as an activator of transcription at the G1-S boundary and as a repressor during other stages of the cell cycle.</text>
</comment>
<comment type="subunit">
    <text>MBF contains SWI6 and MBP1.</text>
</comment>
<comment type="subcellular location">
    <subcellularLocation>
        <location>Nucleus</location>
    </subcellularLocation>
</comment>
<protein>
    <recommendedName>
        <fullName>Transcription factor MBP1</fullName>
    </recommendedName>
    <alternativeName>
        <fullName>MBF subunit P120</fullName>
    </alternativeName>
</protein>
<gene>
    <name type="primary">MBP1</name>
    <name type="ordered locus">KLLA0E05357g</name>
</gene>
<keyword id="KW-0010">Activator</keyword>
<keyword id="KW-0040">ANK repeat</keyword>
<keyword id="KW-0238">DNA-binding</keyword>
<keyword id="KW-0539">Nucleus</keyword>
<keyword id="KW-1185">Reference proteome</keyword>
<keyword id="KW-0677">Repeat</keyword>
<keyword id="KW-0804">Transcription</keyword>
<keyword id="KW-0805">Transcription regulation</keyword>
<reference key="1">
    <citation type="journal article" date="1993" name="Science">
        <title>A role for the transcription factors Mbp1 and Swi4 in progression from G1 to S phase.</title>
        <authorList>
            <person name="Koch C."/>
            <person name="Moll T."/>
            <person name="Neuberg M."/>
            <person name="Ahorn H."/>
            <person name="Nasmyth K."/>
        </authorList>
    </citation>
    <scope>NUCLEOTIDE SEQUENCE [GENOMIC DNA]</scope>
</reference>
<reference key="2">
    <citation type="journal article" date="2004" name="Nature">
        <title>Genome evolution in yeasts.</title>
        <authorList>
            <person name="Dujon B."/>
            <person name="Sherman D."/>
            <person name="Fischer G."/>
            <person name="Durrens P."/>
            <person name="Casaregola S."/>
            <person name="Lafontaine I."/>
            <person name="de Montigny J."/>
            <person name="Marck C."/>
            <person name="Neuveglise C."/>
            <person name="Talla E."/>
            <person name="Goffard N."/>
            <person name="Frangeul L."/>
            <person name="Aigle M."/>
            <person name="Anthouard V."/>
            <person name="Babour A."/>
            <person name="Barbe V."/>
            <person name="Barnay S."/>
            <person name="Blanchin S."/>
            <person name="Beckerich J.-M."/>
            <person name="Beyne E."/>
            <person name="Bleykasten C."/>
            <person name="Boisrame A."/>
            <person name="Boyer J."/>
            <person name="Cattolico L."/>
            <person name="Confanioleri F."/>
            <person name="de Daruvar A."/>
            <person name="Despons L."/>
            <person name="Fabre E."/>
            <person name="Fairhead C."/>
            <person name="Ferry-Dumazet H."/>
            <person name="Groppi A."/>
            <person name="Hantraye F."/>
            <person name="Hennequin C."/>
            <person name="Jauniaux N."/>
            <person name="Joyet P."/>
            <person name="Kachouri R."/>
            <person name="Kerrest A."/>
            <person name="Koszul R."/>
            <person name="Lemaire M."/>
            <person name="Lesur I."/>
            <person name="Ma L."/>
            <person name="Muller H."/>
            <person name="Nicaud J.-M."/>
            <person name="Nikolski M."/>
            <person name="Oztas S."/>
            <person name="Ozier-Kalogeropoulos O."/>
            <person name="Pellenz S."/>
            <person name="Potier S."/>
            <person name="Richard G.-F."/>
            <person name="Straub M.-L."/>
            <person name="Suleau A."/>
            <person name="Swennen D."/>
            <person name="Tekaia F."/>
            <person name="Wesolowski-Louvel M."/>
            <person name="Westhof E."/>
            <person name="Wirth B."/>
            <person name="Zeniou-Meyer M."/>
            <person name="Zivanovic Y."/>
            <person name="Bolotin-Fukuhara M."/>
            <person name="Thierry A."/>
            <person name="Bouchier C."/>
            <person name="Caudron B."/>
            <person name="Scarpelli C."/>
            <person name="Gaillardin C."/>
            <person name="Weissenbach J."/>
            <person name="Wincker P."/>
            <person name="Souciet J.-L."/>
        </authorList>
    </citation>
    <scope>NUCLEOTIDE SEQUENCE [LARGE SCALE GENOMIC DNA]</scope>
    <source>
        <strain>ATCC 8585 / CBS 2359 / DSM 70799 / NBRC 1267 / NRRL Y-1140 / WM37</strain>
    </source>
</reference>
<proteinExistence type="predicted"/>
<sequence length="754" mass="85029">MSSNQIYSAKYSGVDVYEFIHPTGSIMKRKADNWVNATHILKAAKFPKAKRTRILEKEVITDTHEKVQGGFGKYQGTWIPLELASKLAEKFEVLDELKPLFDFTQQEGSASPPQAPKHHHASRSDSTRKKATKSASVPSGKVSEKASSQQQQPVSQQQQQQPGSAPKRRGRPPRNKATVTLQRSQSEMVFPKPSIPSSSIQSTKLPSLQPQFGRSATSLSPIMDVKSPLDQASPQFKELDIEDGLSSDVEPNSIMGTKHEDNTHLMNTKDEPVSSSSSLPSSPSEFSQSVAFGSRSNMQTPLQLNGTTSMNMILPKFSSSQNGPSDSNQRANEYLSKLVNYFISNDTQNESEIPMELLNPPLHCSPFIDTWIDPEHHTAFHWACAMGTLPIVEALLKAGSSIRSLNNVGETPLIRSSIFHNCYTKRTYPQIFEILKDTVFDLDAKSRNVIHRIVSRKSHTPSAVYYLDVVLSKIKDFTPQYRIDVLINQQDNDGNSPLHYAATNKDDQFYQLLLQNGALTTVQNNSGMTPNGIISGRYSMDEITKGQRLDDPYEFNKMYPSQAATRTNRIIPEVINMMKEMANSYQNAYQKRQNEVLQMERTVKSMKKTITSVEMKLLEALNLKETDNVDIVLNDRKEKIDELQRRIATDKRVLINRLEEGQVKLIRKFVDEETKNVEGKTTDGEESEDIEALLKELVLIQLKRKRKLNQIIDVITDNSKVYKYRKMISQGTDIDVSDVDECLDVIYQTLSKEG</sequence>
<evidence type="ECO:0000255" key="1">
    <source>
        <dbReference type="PROSITE-ProRule" id="PRU00630"/>
    </source>
</evidence>
<evidence type="ECO:0000256" key="2">
    <source>
        <dbReference type="SAM" id="MobiDB-lite"/>
    </source>
</evidence>
<evidence type="ECO:0000305" key="3"/>